<keyword id="KW-0678">Repressor</keyword>
<keyword id="KW-0687">Ribonucleoprotein</keyword>
<keyword id="KW-0689">Ribosomal protein</keyword>
<keyword id="KW-0694">RNA-binding</keyword>
<keyword id="KW-0699">rRNA-binding</keyword>
<keyword id="KW-0810">Translation regulation</keyword>
<keyword id="KW-0820">tRNA-binding</keyword>
<protein>
    <recommendedName>
        <fullName evidence="1">Large ribosomal subunit protein uL1</fullName>
    </recommendedName>
    <alternativeName>
        <fullName evidence="2">50S ribosomal protein L1</fullName>
    </alternativeName>
</protein>
<gene>
    <name evidence="1" type="primary">rplA</name>
    <name type="ordered locus">RBAM_001280</name>
</gene>
<reference key="1">
    <citation type="journal article" date="2007" name="Nat. Biotechnol.">
        <title>Comparative analysis of the complete genome sequence of the plant growth-promoting bacterium Bacillus amyloliquefaciens FZB42.</title>
        <authorList>
            <person name="Chen X.H."/>
            <person name="Koumoutsi A."/>
            <person name="Scholz R."/>
            <person name="Eisenreich A."/>
            <person name="Schneider K."/>
            <person name="Heinemeyer I."/>
            <person name="Morgenstern B."/>
            <person name="Voss B."/>
            <person name="Hess W.R."/>
            <person name="Reva O."/>
            <person name="Junge H."/>
            <person name="Voigt B."/>
            <person name="Jungblut P.R."/>
            <person name="Vater J."/>
            <person name="Suessmuth R."/>
            <person name="Liesegang H."/>
            <person name="Strittmatter A."/>
            <person name="Gottschalk G."/>
            <person name="Borriss R."/>
        </authorList>
    </citation>
    <scope>NUCLEOTIDE SEQUENCE [LARGE SCALE GENOMIC DNA]</scope>
    <source>
        <strain>DSM 23117 / BGSC 10A6 / LMG 26770 / FZB42</strain>
    </source>
</reference>
<organism>
    <name type="scientific">Bacillus velezensis (strain DSM 23117 / BGSC 10A6 / LMG 26770 / FZB42)</name>
    <name type="common">Bacillus amyloliquefaciens subsp. plantarum</name>
    <dbReference type="NCBI Taxonomy" id="326423"/>
    <lineage>
        <taxon>Bacteria</taxon>
        <taxon>Bacillati</taxon>
        <taxon>Bacillota</taxon>
        <taxon>Bacilli</taxon>
        <taxon>Bacillales</taxon>
        <taxon>Bacillaceae</taxon>
        <taxon>Bacillus</taxon>
        <taxon>Bacillus amyloliquefaciens group</taxon>
    </lineage>
</organism>
<comment type="function">
    <text evidence="1">Binds directly to 23S rRNA. The L1 stalk is quite mobile in the ribosome, and is involved in E site tRNA release.</text>
</comment>
<comment type="function">
    <text evidence="1">Protein L1 is also a translational repressor protein, it controls the translation of the L11 operon by binding to its mRNA.</text>
</comment>
<comment type="subunit">
    <text evidence="1">Part of the 50S ribosomal subunit.</text>
</comment>
<comment type="similarity">
    <text evidence="1">Belongs to the universal ribosomal protein uL1 family.</text>
</comment>
<dbReference type="EMBL" id="CP000560">
    <property type="protein sequence ID" value="ABS72551.1"/>
    <property type="molecule type" value="Genomic_DNA"/>
</dbReference>
<dbReference type="RefSeq" id="WP_003156431.1">
    <property type="nucleotide sequence ID" value="NC_009725.2"/>
</dbReference>
<dbReference type="SMR" id="A7Z0M5"/>
<dbReference type="GeneID" id="93079267"/>
<dbReference type="KEGG" id="bay:RBAM_001280"/>
<dbReference type="HOGENOM" id="CLU_062853_0_0_9"/>
<dbReference type="Proteomes" id="UP000001120">
    <property type="component" value="Chromosome"/>
</dbReference>
<dbReference type="GO" id="GO:0015934">
    <property type="term" value="C:large ribosomal subunit"/>
    <property type="evidence" value="ECO:0007669"/>
    <property type="project" value="InterPro"/>
</dbReference>
<dbReference type="GO" id="GO:0019843">
    <property type="term" value="F:rRNA binding"/>
    <property type="evidence" value="ECO:0007669"/>
    <property type="project" value="UniProtKB-UniRule"/>
</dbReference>
<dbReference type="GO" id="GO:0003735">
    <property type="term" value="F:structural constituent of ribosome"/>
    <property type="evidence" value="ECO:0007669"/>
    <property type="project" value="InterPro"/>
</dbReference>
<dbReference type="GO" id="GO:0000049">
    <property type="term" value="F:tRNA binding"/>
    <property type="evidence" value="ECO:0007669"/>
    <property type="project" value="UniProtKB-KW"/>
</dbReference>
<dbReference type="GO" id="GO:0006417">
    <property type="term" value="P:regulation of translation"/>
    <property type="evidence" value="ECO:0007669"/>
    <property type="project" value="UniProtKB-KW"/>
</dbReference>
<dbReference type="GO" id="GO:0006412">
    <property type="term" value="P:translation"/>
    <property type="evidence" value="ECO:0007669"/>
    <property type="project" value="UniProtKB-UniRule"/>
</dbReference>
<dbReference type="CDD" id="cd00403">
    <property type="entry name" value="Ribosomal_L1"/>
    <property type="match status" value="1"/>
</dbReference>
<dbReference type="FunFam" id="3.40.50.790:FF:000001">
    <property type="entry name" value="50S ribosomal protein L1"/>
    <property type="match status" value="1"/>
</dbReference>
<dbReference type="Gene3D" id="3.30.190.20">
    <property type="match status" value="1"/>
</dbReference>
<dbReference type="Gene3D" id="3.40.50.790">
    <property type="match status" value="1"/>
</dbReference>
<dbReference type="HAMAP" id="MF_01318_B">
    <property type="entry name" value="Ribosomal_uL1_B"/>
    <property type="match status" value="1"/>
</dbReference>
<dbReference type="InterPro" id="IPR005878">
    <property type="entry name" value="Ribosom_uL1_bac-type"/>
</dbReference>
<dbReference type="InterPro" id="IPR002143">
    <property type="entry name" value="Ribosomal_uL1"/>
</dbReference>
<dbReference type="InterPro" id="IPR023674">
    <property type="entry name" value="Ribosomal_uL1-like"/>
</dbReference>
<dbReference type="InterPro" id="IPR028364">
    <property type="entry name" value="Ribosomal_uL1/biogenesis"/>
</dbReference>
<dbReference type="InterPro" id="IPR016095">
    <property type="entry name" value="Ribosomal_uL1_3-a/b-sand"/>
</dbReference>
<dbReference type="InterPro" id="IPR023673">
    <property type="entry name" value="Ribosomal_uL1_CS"/>
</dbReference>
<dbReference type="NCBIfam" id="TIGR01169">
    <property type="entry name" value="rplA_bact"/>
    <property type="match status" value="1"/>
</dbReference>
<dbReference type="PANTHER" id="PTHR36427">
    <property type="entry name" value="54S RIBOSOMAL PROTEIN L1, MITOCHONDRIAL"/>
    <property type="match status" value="1"/>
</dbReference>
<dbReference type="PANTHER" id="PTHR36427:SF3">
    <property type="entry name" value="LARGE RIBOSOMAL SUBUNIT PROTEIN UL1M"/>
    <property type="match status" value="1"/>
</dbReference>
<dbReference type="Pfam" id="PF00687">
    <property type="entry name" value="Ribosomal_L1"/>
    <property type="match status" value="1"/>
</dbReference>
<dbReference type="PIRSF" id="PIRSF002155">
    <property type="entry name" value="Ribosomal_L1"/>
    <property type="match status" value="1"/>
</dbReference>
<dbReference type="SUPFAM" id="SSF56808">
    <property type="entry name" value="Ribosomal protein L1"/>
    <property type="match status" value="1"/>
</dbReference>
<dbReference type="PROSITE" id="PS01199">
    <property type="entry name" value="RIBOSOMAL_L1"/>
    <property type="match status" value="1"/>
</dbReference>
<sequence length="232" mass="24916">MAKKGKKYVEAAKLVDRAKAYDVAEAVALTKKTNTAKFDATVEVAFRLGVDPRKNDQQIRGAVVLPNGTGKTQRVLVFAKGEKAKEAEAAGADYVGDSDYIAKIQQGWFEFDVIVATPDMMGEVGKIGRVLGPKGLMPNPKTGTVTFEVEKAIGEIKAGKVEYRVDKAGNIHVPIGKVSFEDEKLVENFTTMYDTILKAKPAAAKGVYVKNVAVTSTMGPGVKVDASTFNVK</sequence>
<feature type="chain" id="PRO_1000051900" description="Large ribosomal subunit protein uL1">
    <location>
        <begin position="1"/>
        <end position="232"/>
    </location>
</feature>
<proteinExistence type="inferred from homology"/>
<evidence type="ECO:0000255" key="1">
    <source>
        <dbReference type="HAMAP-Rule" id="MF_01318"/>
    </source>
</evidence>
<evidence type="ECO:0000305" key="2"/>
<name>RL1_BACVZ</name>
<accession>A7Z0M5</accession>